<protein>
    <recommendedName>
        <fullName evidence="3">Potassium voltage-gated channel subfamily B member 1</fullName>
    </recommendedName>
    <alternativeName>
        <fullName>Voltage-gated potassium channel subunit Kv2.1</fullName>
    </alternativeName>
    <alternativeName>
        <fullName evidence="17">mShab</fullName>
    </alternativeName>
</protein>
<organism>
    <name type="scientific">Mus musculus</name>
    <name type="common">Mouse</name>
    <dbReference type="NCBI Taxonomy" id="10090"/>
    <lineage>
        <taxon>Eukaryota</taxon>
        <taxon>Metazoa</taxon>
        <taxon>Chordata</taxon>
        <taxon>Craniata</taxon>
        <taxon>Vertebrata</taxon>
        <taxon>Euteleostomi</taxon>
        <taxon>Mammalia</taxon>
        <taxon>Eutheria</taxon>
        <taxon>Euarchontoglires</taxon>
        <taxon>Glires</taxon>
        <taxon>Rodentia</taxon>
        <taxon>Myomorpha</taxon>
        <taxon>Muroidea</taxon>
        <taxon>Muridae</taxon>
        <taxon>Murinae</taxon>
        <taxon>Mus</taxon>
        <taxon>Mus</taxon>
    </lineage>
</organism>
<dbReference type="EMBL" id="M64228">
    <property type="protein sequence ID" value="AAA40112.1"/>
    <property type="molecule type" value="mRNA"/>
</dbReference>
<dbReference type="EMBL" id="AL591711">
    <property type="status" value="NOT_ANNOTATED_CDS"/>
    <property type="molecule type" value="Genomic_DNA"/>
</dbReference>
<dbReference type="EMBL" id="AL591854">
    <property type="status" value="NOT_ANNOTATED_CDS"/>
    <property type="molecule type" value="Genomic_DNA"/>
</dbReference>
<dbReference type="EMBL" id="CH466551">
    <property type="protein sequence ID" value="EDL06500.1"/>
    <property type="molecule type" value="Genomic_DNA"/>
</dbReference>
<dbReference type="EMBL" id="BC031776">
    <property type="protein sequence ID" value="AAH31776.1"/>
    <property type="molecule type" value="mRNA"/>
</dbReference>
<dbReference type="EMBL" id="BC061501">
    <property type="protein sequence ID" value="AAH61501.1"/>
    <property type="molecule type" value="mRNA"/>
</dbReference>
<dbReference type="CCDS" id="CCDS17096.1"/>
<dbReference type="PIR" id="I56529">
    <property type="entry name" value="I56529"/>
</dbReference>
<dbReference type="RefSeq" id="NP_032446.2">
    <property type="nucleotide sequence ID" value="NM_008420.4"/>
</dbReference>
<dbReference type="RefSeq" id="XP_017171221.1">
    <property type="nucleotide sequence ID" value="XM_017315732.3"/>
</dbReference>
<dbReference type="RefSeq" id="XP_017171222.1">
    <property type="nucleotide sequence ID" value="XM_017315733.1"/>
</dbReference>
<dbReference type="SMR" id="Q03717"/>
<dbReference type="BioGRID" id="200886">
    <property type="interactions" value="22"/>
</dbReference>
<dbReference type="CORUM" id="Q03717"/>
<dbReference type="FunCoup" id="Q03717">
    <property type="interactions" value="210"/>
</dbReference>
<dbReference type="IntAct" id="Q03717">
    <property type="interactions" value="3"/>
</dbReference>
<dbReference type="MINT" id="Q03717"/>
<dbReference type="STRING" id="10090.ENSMUSP00000147093"/>
<dbReference type="GuidetoPHARMACOLOGY" id="546"/>
<dbReference type="GlyGen" id="Q03717">
    <property type="glycosylation" value="2 sites, 1 N-linked glycan (1 site), 1 O-linked glycan (1 site)"/>
</dbReference>
<dbReference type="iPTMnet" id="Q03717"/>
<dbReference type="PhosphoSitePlus" id="Q03717"/>
<dbReference type="SwissPalm" id="Q03717"/>
<dbReference type="jPOST" id="Q03717"/>
<dbReference type="PaxDb" id="10090-ENSMUSP00000057981"/>
<dbReference type="PeptideAtlas" id="Q03717"/>
<dbReference type="ProteomicsDB" id="269451"/>
<dbReference type="ABCD" id="Q03717">
    <property type="antibodies" value="2 sequenced antibodies"/>
</dbReference>
<dbReference type="Antibodypedia" id="28477">
    <property type="antibodies" value="409 antibodies from 37 providers"/>
</dbReference>
<dbReference type="DNASU" id="16500"/>
<dbReference type="Ensembl" id="ENSMUST00000059826.10">
    <property type="protein sequence ID" value="ENSMUSP00000057981.8"/>
    <property type="gene ID" value="ENSMUSG00000050556.10"/>
</dbReference>
<dbReference type="Ensembl" id="ENSMUST00000207917.2">
    <property type="protein sequence ID" value="ENSMUSP00000147093.2"/>
    <property type="gene ID" value="ENSMUSG00000050556.10"/>
</dbReference>
<dbReference type="GeneID" id="16500"/>
<dbReference type="KEGG" id="mmu:16500"/>
<dbReference type="UCSC" id="uc008nzh.2">
    <property type="organism name" value="mouse"/>
</dbReference>
<dbReference type="AGR" id="MGI:96666"/>
<dbReference type="CTD" id="3745"/>
<dbReference type="MGI" id="MGI:96666">
    <property type="gene designation" value="Kcnb1"/>
</dbReference>
<dbReference type="VEuPathDB" id="HostDB:ENSMUSG00000050556"/>
<dbReference type="eggNOG" id="KOG3713">
    <property type="taxonomic scope" value="Eukaryota"/>
</dbReference>
<dbReference type="GeneTree" id="ENSGT00940000154899"/>
<dbReference type="HOGENOM" id="CLU_011722_2_1_1"/>
<dbReference type="InParanoid" id="Q03717"/>
<dbReference type="OMA" id="ASIHQYI"/>
<dbReference type="OrthoDB" id="296522at2759"/>
<dbReference type="PhylomeDB" id="Q03717"/>
<dbReference type="TreeFam" id="TF313103"/>
<dbReference type="Reactome" id="R-MMU-1296072">
    <property type="pathway name" value="Voltage gated Potassium channels"/>
</dbReference>
<dbReference type="Reactome" id="R-MMU-381676">
    <property type="pathway name" value="Glucagon-like Peptide-1 (GLP1) regulates insulin secretion"/>
</dbReference>
<dbReference type="BioGRID-ORCS" id="16500">
    <property type="hits" value="2 hits in 76 CRISPR screens"/>
</dbReference>
<dbReference type="CD-CODE" id="CE726F99">
    <property type="entry name" value="Postsynaptic density"/>
</dbReference>
<dbReference type="ChiTaRS" id="Kcnb1">
    <property type="organism name" value="mouse"/>
</dbReference>
<dbReference type="PRO" id="PR:Q03717"/>
<dbReference type="Proteomes" id="UP000000589">
    <property type="component" value="Chromosome 2"/>
</dbReference>
<dbReference type="RNAct" id="Q03717">
    <property type="molecule type" value="protein"/>
</dbReference>
<dbReference type="Bgee" id="ENSMUSG00000050556">
    <property type="expression patterns" value="Expressed in retinal neural layer and 153 other cell types or tissues"/>
</dbReference>
<dbReference type="GO" id="GO:0016324">
    <property type="term" value="C:apical plasma membrane"/>
    <property type="evidence" value="ECO:0007669"/>
    <property type="project" value="Ensembl"/>
</dbReference>
<dbReference type="GO" id="GO:0030424">
    <property type="term" value="C:axon"/>
    <property type="evidence" value="ECO:0000250"/>
    <property type="project" value="UniProtKB"/>
</dbReference>
<dbReference type="GO" id="GO:0009986">
    <property type="term" value="C:cell surface"/>
    <property type="evidence" value="ECO:0007669"/>
    <property type="project" value="Ensembl"/>
</dbReference>
<dbReference type="GO" id="GO:0098981">
    <property type="term" value="C:cholinergic synapse"/>
    <property type="evidence" value="ECO:0007669"/>
    <property type="project" value="Ensembl"/>
</dbReference>
<dbReference type="GO" id="GO:0030425">
    <property type="term" value="C:dendrite"/>
    <property type="evidence" value="ECO:0000314"/>
    <property type="project" value="UniProtKB"/>
</dbReference>
<dbReference type="GO" id="GO:0032590">
    <property type="term" value="C:dendrite membrane"/>
    <property type="evidence" value="ECO:0007669"/>
    <property type="project" value="Ensembl"/>
</dbReference>
<dbReference type="GO" id="GO:0016328">
    <property type="term" value="C:lateral plasma membrane"/>
    <property type="evidence" value="ECO:0007669"/>
    <property type="project" value="UniProtKB-SubCell"/>
</dbReference>
<dbReference type="GO" id="GO:0032809">
    <property type="term" value="C:neuronal cell body membrane"/>
    <property type="evidence" value="ECO:0000314"/>
    <property type="project" value="UniProtKB"/>
</dbReference>
<dbReference type="GO" id="GO:0043204">
    <property type="term" value="C:perikaryon"/>
    <property type="evidence" value="ECO:0000250"/>
    <property type="project" value="UniProtKB"/>
</dbReference>
<dbReference type="GO" id="GO:0048471">
    <property type="term" value="C:perinuclear region of cytoplasm"/>
    <property type="evidence" value="ECO:0007669"/>
    <property type="project" value="Ensembl"/>
</dbReference>
<dbReference type="GO" id="GO:0005886">
    <property type="term" value="C:plasma membrane"/>
    <property type="evidence" value="ECO:0000314"/>
    <property type="project" value="UniProtKB"/>
</dbReference>
<dbReference type="GO" id="GO:0099634">
    <property type="term" value="C:postsynaptic specialization membrane"/>
    <property type="evidence" value="ECO:0007669"/>
    <property type="project" value="Ensembl"/>
</dbReference>
<dbReference type="GO" id="GO:1990635">
    <property type="term" value="C:proximal dendrite"/>
    <property type="evidence" value="ECO:0007669"/>
    <property type="project" value="Ensembl"/>
</dbReference>
<dbReference type="GO" id="GO:0042383">
    <property type="term" value="C:sarcolemma"/>
    <property type="evidence" value="ECO:0007669"/>
    <property type="project" value="UniProtKB-SubCell"/>
</dbReference>
<dbReference type="GO" id="GO:0008076">
    <property type="term" value="C:voltage-gated potassium channel complex"/>
    <property type="evidence" value="ECO:0000314"/>
    <property type="project" value="UniProtKB"/>
</dbReference>
<dbReference type="GO" id="GO:0005251">
    <property type="term" value="F:delayed rectifier potassium channel activity"/>
    <property type="evidence" value="ECO:0000314"/>
    <property type="project" value="UniProtKB"/>
</dbReference>
<dbReference type="GO" id="GO:0015271">
    <property type="term" value="F:outward rectifier potassium channel activity"/>
    <property type="evidence" value="ECO:0007669"/>
    <property type="project" value="Ensembl"/>
</dbReference>
<dbReference type="GO" id="GO:0046982">
    <property type="term" value="F:protein heterodimerization activity"/>
    <property type="evidence" value="ECO:0000250"/>
    <property type="project" value="UniProtKB"/>
</dbReference>
<dbReference type="GO" id="GO:0000149">
    <property type="term" value="F:SNARE binding"/>
    <property type="evidence" value="ECO:0007669"/>
    <property type="project" value="Ensembl"/>
</dbReference>
<dbReference type="GO" id="GO:0044325">
    <property type="term" value="F:transmembrane transporter binding"/>
    <property type="evidence" value="ECO:0007669"/>
    <property type="project" value="Ensembl"/>
</dbReference>
<dbReference type="GO" id="GO:0005249">
    <property type="term" value="F:voltage-gated potassium channel activity"/>
    <property type="evidence" value="ECO:0000266"/>
    <property type="project" value="MGI"/>
</dbReference>
<dbReference type="GO" id="GO:0001508">
    <property type="term" value="P:action potential"/>
    <property type="evidence" value="ECO:0000250"/>
    <property type="project" value="UniProtKB"/>
</dbReference>
<dbReference type="GO" id="GO:0071277">
    <property type="term" value="P:cellular response to calcium ion"/>
    <property type="evidence" value="ECO:0007669"/>
    <property type="project" value="Ensembl"/>
</dbReference>
<dbReference type="GO" id="GO:0071333">
    <property type="term" value="P:cellular response to glucose stimulus"/>
    <property type="evidence" value="ECO:0000314"/>
    <property type="project" value="UniProtKB"/>
</dbReference>
<dbReference type="GO" id="GO:0031669">
    <property type="term" value="P:cellular response to nutrient levels"/>
    <property type="evidence" value="ECO:0000250"/>
    <property type="project" value="UniProtKB"/>
</dbReference>
<dbReference type="GO" id="GO:0045163">
    <property type="term" value="P:clustering of voltage-gated potassium channels"/>
    <property type="evidence" value="ECO:0007669"/>
    <property type="project" value="Ensembl"/>
</dbReference>
<dbReference type="GO" id="GO:0042593">
    <property type="term" value="P:glucose homeostasis"/>
    <property type="evidence" value="ECO:0000315"/>
    <property type="project" value="UniProtKB"/>
</dbReference>
<dbReference type="GO" id="GO:0007215">
    <property type="term" value="P:glutamate receptor signaling pathway"/>
    <property type="evidence" value="ECO:0000250"/>
    <property type="project" value="UniProtKB"/>
</dbReference>
<dbReference type="GO" id="GO:0046676">
    <property type="term" value="P:negative regulation of insulin secretion"/>
    <property type="evidence" value="ECO:0000315"/>
    <property type="project" value="UniProtKB"/>
</dbReference>
<dbReference type="GO" id="GO:0045956">
    <property type="term" value="P:positive regulation of calcium ion-dependent exocytosis"/>
    <property type="evidence" value="ECO:0000250"/>
    <property type="project" value="UniProtKB"/>
</dbReference>
<dbReference type="GO" id="GO:0033605">
    <property type="term" value="P:positive regulation of catecholamine secretion"/>
    <property type="evidence" value="ECO:0000250"/>
    <property type="project" value="UniProtKB"/>
</dbReference>
<dbReference type="GO" id="GO:1900454">
    <property type="term" value="P:positive regulation of long-term synaptic depression"/>
    <property type="evidence" value="ECO:0000315"/>
    <property type="project" value="UniProtKB"/>
</dbReference>
<dbReference type="GO" id="GO:0010701">
    <property type="term" value="P:positive regulation of norepinephrine secretion"/>
    <property type="evidence" value="ECO:0000250"/>
    <property type="project" value="UniProtKB"/>
</dbReference>
<dbReference type="GO" id="GO:0090314">
    <property type="term" value="P:positive regulation of protein targeting to membrane"/>
    <property type="evidence" value="ECO:0000250"/>
    <property type="project" value="UniProtKB"/>
</dbReference>
<dbReference type="GO" id="GO:0097623">
    <property type="term" value="P:potassium ion export across plasma membrane"/>
    <property type="evidence" value="ECO:0007669"/>
    <property type="project" value="Ensembl"/>
</dbReference>
<dbReference type="GO" id="GO:0071805">
    <property type="term" value="P:potassium ion transmembrane transport"/>
    <property type="evidence" value="ECO:0000314"/>
    <property type="project" value="UniProtKB"/>
</dbReference>
<dbReference type="GO" id="GO:0006813">
    <property type="term" value="P:potassium ion transport"/>
    <property type="evidence" value="ECO:0000266"/>
    <property type="project" value="MGI"/>
</dbReference>
<dbReference type="GO" id="GO:0051260">
    <property type="term" value="P:protein homooligomerization"/>
    <property type="evidence" value="ECO:0007669"/>
    <property type="project" value="InterPro"/>
</dbReference>
<dbReference type="GO" id="GO:0072659">
    <property type="term" value="P:protein localization to plasma membrane"/>
    <property type="evidence" value="ECO:0000250"/>
    <property type="project" value="UniProtKB"/>
</dbReference>
<dbReference type="GO" id="GO:0098900">
    <property type="term" value="P:regulation of action potential"/>
    <property type="evidence" value="ECO:0000315"/>
    <property type="project" value="UniProtKB"/>
</dbReference>
<dbReference type="GO" id="GO:2000671">
    <property type="term" value="P:regulation of motor neuron apoptotic process"/>
    <property type="evidence" value="ECO:0000250"/>
    <property type="project" value="UniProtKB"/>
</dbReference>
<dbReference type="GO" id="GO:0048678">
    <property type="term" value="P:response to axon injury"/>
    <property type="evidence" value="ECO:0007669"/>
    <property type="project" value="Ensembl"/>
</dbReference>
<dbReference type="GO" id="GO:1902065">
    <property type="term" value="P:response to L-glutamate"/>
    <property type="evidence" value="ECO:0007669"/>
    <property type="project" value="Ensembl"/>
</dbReference>
<dbReference type="GO" id="GO:0006904">
    <property type="term" value="P:vesicle docking involved in exocytosis"/>
    <property type="evidence" value="ECO:0000250"/>
    <property type="project" value="UniProtKB"/>
</dbReference>
<dbReference type="CDD" id="cd18412">
    <property type="entry name" value="BTB_POZ_KCNB2"/>
    <property type="match status" value="1"/>
</dbReference>
<dbReference type="FunFam" id="1.10.287.70:FF:000034">
    <property type="entry name" value="Potassium voltage-gated channel subfamily B member"/>
    <property type="match status" value="1"/>
</dbReference>
<dbReference type="FunFam" id="1.20.120.350:FF:000018">
    <property type="entry name" value="Potassium voltage-gated channel subfamily B member"/>
    <property type="match status" value="1"/>
</dbReference>
<dbReference type="FunFam" id="3.30.710.10:FF:000010">
    <property type="entry name" value="Potassium voltage-gated channel subfamily B member"/>
    <property type="match status" value="1"/>
</dbReference>
<dbReference type="Gene3D" id="1.10.287.70">
    <property type="match status" value="1"/>
</dbReference>
<dbReference type="Gene3D" id="3.30.710.10">
    <property type="entry name" value="Potassium Channel Kv1.1, Chain A"/>
    <property type="match status" value="1"/>
</dbReference>
<dbReference type="Gene3D" id="1.20.120.350">
    <property type="entry name" value="Voltage-gated potassium channels. Chain C"/>
    <property type="match status" value="1"/>
</dbReference>
<dbReference type="InterPro" id="IPR000210">
    <property type="entry name" value="BTB/POZ_dom"/>
</dbReference>
<dbReference type="InterPro" id="IPR005821">
    <property type="entry name" value="Ion_trans_dom"/>
</dbReference>
<dbReference type="InterPro" id="IPR003968">
    <property type="entry name" value="K_chnl_volt-dep_Kv"/>
</dbReference>
<dbReference type="InterPro" id="IPR003973">
    <property type="entry name" value="K_chnl_volt-dep_Kv2"/>
</dbReference>
<dbReference type="InterPro" id="IPR004350">
    <property type="entry name" value="K_chnl_volt-dep_Kv2.1"/>
</dbReference>
<dbReference type="InterPro" id="IPR011333">
    <property type="entry name" value="SKP1/BTB/POZ_sf"/>
</dbReference>
<dbReference type="InterPro" id="IPR003131">
    <property type="entry name" value="T1-type_BTB"/>
</dbReference>
<dbReference type="InterPro" id="IPR028325">
    <property type="entry name" value="VG_K_chnl"/>
</dbReference>
<dbReference type="InterPro" id="IPR027359">
    <property type="entry name" value="Volt_channel_dom_sf"/>
</dbReference>
<dbReference type="PANTHER" id="PTHR11537:SF63">
    <property type="entry name" value="POTASSIUM VOLTAGE-GATED CHANNEL SUBFAMILY B MEMBER 1"/>
    <property type="match status" value="1"/>
</dbReference>
<dbReference type="PANTHER" id="PTHR11537">
    <property type="entry name" value="VOLTAGE-GATED POTASSIUM CHANNEL"/>
    <property type="match status" value="1"/>
</dbReference>
<dbReference type="Pfam" id="PF02214">
    <property type="entry name" value="BTB_2"/>
    <property type="match status" value="1"/>
</dbReference>
<dbReference type="Pfam" id="PF00520">
    <property type="entry name" value="Ion_trans"/>
    <property type="match status" value="1"/>
</dbReference>
<dbReference type="Pfam" id="PF03521">
    <property type="entry name" value="Kv2channel"/>
    <property type="match status" value="2"/>
</dbReference>
<dbReference type="PRINTS" id="PR00169">
    <property type="entry name" value="KCHANNEL"/>
</dbReference>
<dbReference type="PRINTS" id="PR01514">
    <property type="entry name" value="KV21CHANNEL"/>
</dbReference>
<dbReference type="PRINTS" id="PR01491">
    <property type="entry name" value="KVCHANNEL"/>
</dbReference>
<dbReference type="PRINTS" id="PR01495">
    <property type="entry name" value="SHABCHANNEL"/>
</dbReference>
<dbReference type="SMART" id="SM00225">
    <property type="entry name" value="BTB"/>
    <property type="match status" value="1"/>
</dbReference>
<dbReference type="SUPFAM" id="SSF54695">
    <property type="entry name" value="POZ domain"/>
    <property type="match status" value="1"/>
</dbReference>
<dbReference type="SUPFAM" id="SSF81324">
    <property type="entry name" value="Voltage-gated potassium channels"/>
    <property type="match status" value="1"/>
</dbReference>
<proteinExistence type="evidence at protein level"/>
<reference key="1">
    <citation type="journal article" date="1991" name="J. Neurosci.">
        <title>A mouse brain homolog of the Drosophila Shab K+ channel with conserved delayed-rectifier properties.</title>
        <authorList>
            <person name="Pak M.D."/>
            <person name="Covarrubias M."/>
            <person name="Ratcliffe A."/>
            <person name="Salkoff L."/>
        </authorList>
    </citation>
    <scope>NUCLEOTIDE SEQUENCE [MRNA]</scope>
    <scope>FUNCTION</scope>
    <scope>TRANSPORTER ACTIVITY</scope>
    <scope>BIOPHYSICOCHEMICAL PROPERTIES</scope>
    <scope>ACTIVITY REGULATION</scope>
    <source>
        <tissue>Brain</tissue>
    </source>
</reference>
<reference key="2">
    <citation type="journal article" date="2009" name="PLoS Biol.">
        <title>Lineage-specific biology revealed by a finished genome assembly of the mouse.</title>
        <authorList>
            <person name="Church D.M."/>
            <person name="Goodstadt L."/>
            <person name="Hillier L.W."/>
            <person name="Zody M.C."/>
            <person name="Goldstein S."/>
            <person name="She X."/>
            <person name="Bult C.J."/>
            <person name="Agarwala R."/>
            <person name="Cherry J.L."/>
            <person name="DiCuccio M."/>
            <person name="Hlavina W."/>
            <person name="Kapustin Y."/>
            <person name="Meric P."/>
            <person name="Maglott D."/>
            <person name="Birtle Z."/>
            <person name="Marques A.C."/>
            <person name="Graves T."/>
            <person name="Zhou S."/>
            <person name="Teague B."/>
            <person name="Potamousis K."/>
            <person name="Churas C."/>
            <person name="Place M."/>
            <person name="Herschleb J."/>
            <person name="Runnheim R."/>
            <person name="Forrest D."/>
            <person name="Amos-Landgraf J."/>
            <person name="Schwartz D.C."/>
            <person name="Cheng Z."/>
            <person name="Lindblad-Toh K."/>
            <person name="Eichler E.E."/>
            <person name="Ponting C.P."/>
        </authorList>
    </citation>
    <scope>NUCLEOTIDE SEQUENCE [LARGE SCALE GENOMIC DNA]</scope>
    <source>
        <strain>C57BL/6J</strain>
    </source>
</reference>
<reference key="3">
    <citation type="submission" date="2005-07" db="EMBL/GenBank/DDBJ databases">
        <authorList>
            <person name="Mural R.J."/>
            <person name="Adams M.D."/>
            <person name="Myers E.W."/>
            <person name="Smith H.O."/>
            <person name="Venter J.C."/>
        </authorList>
    </citation>
    <scope>NUCLEOTIDE SEQUENCE [LARGE SCALE GENOMIC DNA]</scope>
</reference>
<reference key="4">
    <citation type="journal article" date="2004" name="Genome Res.">
        <title>The status, quality, and expansion of the NIH full-length cDNA project: the Mammalian Gene Collection (MGC).</title>
        <authorList>
            <consortium name="The MGC Project Team"/>
        </authorList>
    </citation>
    <scope>NUCLEOTIDE SEQUENCE [LARGE SCALE MRNA]</scope>
    <source>
        <tissue>Eye</tissue>
    </source>
</reference>
<reference key="5">
    <citation type="journal article" date="1999" name="Ann. N. Y. Acad. Sci.">
        <title>Molecular diversity of K+ channels.</title>
        <authorList>
            <person name="Coetzee W.A."/>
            <person name="Amarillo Y."/>
            <person name="Chiu J."/>
            <person name="Chow A."/>
            <person name="Lau D."/>
            <person name="McCormack T."/>
            <person name="Moreno H."/>
            <person name="Nadal M.S."/>
            <person name="Ozaita A."/>
            <person name="Pountney D."/>
            <person name="Saganich M."/>
            <person name="Vega-Saenz de Miera E."/>
            <person name="Rudy B."/>
        </authorList>
    </citation>
    <scope>REVIEW</scope>
</reference>
<reference key="6">
    <citation type="journal article" date="1999" name="Circ. Res.">
        <title>Attenuation of the slow component of delayed rectification, action potential prolongation, and triggered activity in mice expressing a dominant-negative Kv2 alpha subunit.</title>
        <authorList>
            <person name="Xu H."/>
            <person name="Barry D.M."/>
            <person name="Li H."/>
            <person name="Brunet S."/>
            <person name="Guo W."/>
            <person name="Nerbonne J.M."/>
        </authorList>
    </citation>
    <scope>FUNCTION</scope>
    <scope>SUBCELLULAR LOCATION</scope>
    <scope>TISSUE SPECIFICITY</scope>
</reference>
<reference key="7">
    <citation type="journal article" date="2000" name="EMBO J.">
        <title>Hypomyelination and increased activity of voltage-gated K(+) channels in mice lacking protein tyrosine phosphatase epsilon.</title>
        <authorList>
            <person name="Peretz A."/>
            <person name="Gil-Henn H."/>
            <person name="Sobko A."/>
            <person name="Shinder V."/>
            <person name="Attali B."/>
            <person name="Elson A."/>
        </authorList>
    </citation>
    <scope>PHOSPHORYLATION</scope>
    <scope>INTERACTION WITH PTPRE</scope>
    <scope>TISSUE SPECIFICITY</scope>
</reference>
<reference key="8">
    <citation type="journal article" date="2002" name="J. Biol. Chem.">
        <title>Inhibition of Kv2.1 voltage-dependent K+ channels in pancreatic beta-cells enhances glucose-dependent insulin secretion.</title>
        <authorList>
            <person name="MacDonald P.E."/>
            <person name="Sewing S."/>
            <person name="Wang J."/>
            <person name="Joseph J.W."/>
            <person name="Smukler S.R."/>
            <person name="Sakellaropoulos G."/>
            <person name="Wang J."/>
            <person name="Saleh M.C."/>
            <person name="Chan C.B."/>
            <person name="Tsushima R.G."/>
            <person name="Salapatek A.M."/>
            <person name="Wheeler M.B."/>
        </authorList>
    </citation>
    <scope>FUNCTION</scope>
    <scope>SUBCELLULAR LOCATION</scope>
    <scope>TISSUE SPECIFICITY</scope>
</reference>
<reference key="9">
    <citation type="journal article" date="2004" name="Am. J. Physiol.">
        <title>Attenuation of I(K,slow1) and I(K,slow2) in Kv1/Kv2DN mice prolongs APD and QT intervals but does not suppress spontaneous or inducible arrhythmias.</title>
        <authorList>
            <person name="Kodirov S.A."/>
            <person name="Brunner M."/>
            <person name="Nerbonne J.M."/>
            <person name="Buckett P."/>
            <person name="Mitchell G.F."/>
            <person name="Koren G."/>
        </authorList>
    </citation>
    <scope>FUNCTION</scope>
    <scope>SUBCELLULAR LOCATION</scope>
    <scope>TISSUE SPECIFICITY</scope>
</reference>
<reference key="10">
    <citation type="journal article" date="2005" name="Cell Biochem. Biophys.">
        <title>Molecular determinants of voltage-gated potassium currents in vascular smooth muscle.</title>
        <authorList>
            <person name="Cox R.H."/>
        </authorList>
    </citation>
    <scope>REVIEW</scope>
</reference>
<reference key="11">
    <citation type="journal article" date="2006" name="Mol. Cell. Proteomics">
        <title>Comprehensive identification of phosphorylation sites in postsynaptic density preparations.</title>
        <authorList>
            <person name="Trinidad J.C."/>
            <person name="Specht C.G."/>
            <person name="Thalhammer A."/>
            <person name="Schoepfer R."/>
            <person name="Burlingame A.L."/>
        </authorList>
    </citation>
    <scope>PHOSPHORYLATION [LARGE SCALE ANALYSIS] AT SER-655</scope>
    <scope>IDENTIFICATION BY MASS SPECTROMETRY [LARGE SCALE ANALYSIS]</scope>
    <source>
        <tissue>Brain</tissue>
    </source>
</reference>
<reference key="12">
    <citation type="journal article" date="2007" name="Cell Metab.">
        <title>Kv2.1 ablation alters glucose-induced islet electrical activity, enhancing insulin secretion.</title>
        <authorList>
            <person name="Jacobson D.A."/>
            <person name="Kuznetsov A."/>
            <person name="Lopez J.P."/>
            <person name="Kash S."/>
            <person name="Ammala C.E."/>
            <person name="Philipson L.H."/>
        </authorList>
    </citation>
    <scope>FUNCTION</scope>
    <scope>DISRUPTION PHENOTYPE</scope>
    <scope>SUBCELLULAR LOCATION</scope>
    <scope>TISSUE SPECIFICITY</scope>
</reference>
<reference key="13">
    <citation type="journal article" date="2007" name="Mol. Cell. Proteomics">
        <title>Qualitative and quantitative analyses of protein phosphorylation in naive and stimulated mouse synaptosomal preparations.</title>
        <authorList>
            <person name="Munton R.P."/>
            <person name="Tweedie-Cullen R."/>
            <person name="Livingstone-Zatchej M."/>
            <person name="Weinandy F."/>
            <person name="Waidelich M."/>
            <person name="Longo D."/>
            <person name="Gehrig P."/>
            <person name="Potthast F."/>
            <person name="Rutishauser D."/>
            <person name="Gerrits B."/>
            <person name="Panse C."/>
            <person name="Schlapbach R."/>
            <person name="Mansuy I.M."/>
        </authorList>
    </citation>
    <scope>IDENTIFICATION BY MASS SPECTROMETRY [LARGE SCALE ANALYSIS]</scope>
    <source>
        <tissue>Brain cortex</tissue>
    </source>
</reference>
<reference key="14">
    <citation type="journal article" date="2009" name="Biophys. J.">
        <title>A model of action potentials and fast Ca2+ dynamics in pancreatic beta-cells.</title>
        <authorList>
            <person name="Fridlyand L.E."/>
            <person name="Jacobson D.A."/>
            <person name="Kuznetsov A."/>
            <person name="Philipson L.H."/>
        </authorList>
    </citation>
    <scope>FUNCTION</scope>
    <scope>DISRUPTION PHENOTYPE</scope>
</reference>
<reference key="15">
    <citation type="journal article" date="2010" name="Cell">
        <title>A tissue-specific atlas of mouse protein phosphorylation and expression.</title>
        <authorList>
            <person name="Huttlin E.L."/>
            <person name="Jedrychowski M.P."/>
            <person name="Elias J.E."/>
            <person name="Goswami T."/>
            <person name="Rad R."/>
            <person name="Beausoleil S.A."/>
            <person name="Villen J."/>
            <person name="Haas W."/>
            <person name="Sowa M.E."/>
            <person name="Gygi S.P."/>
        </authorList>
    </citation>
    <scope>PHOSPHORYLATION [LARGE SCALE ANALYSIS] AT SER-444; SER-457; SER-655 AND SER-804</scope>
    <scope>IDENTIFICATION BY MASS SPECTROMETRY [LARGE SCALE ANALYSIS]</scope>
    <source>
        <tissue>Brain</tissue>
        <tissue>Brown adipose tissue</tissue>
    </source>
</reference>
<reference key="16">
    <citation type="journal article" date="2011" name="EMBO Rep.">
        <title>AMIGO is an auxiliary subunit of the Kv2.1 potassium channel.</title>
        <authorList>
            <person name="Peltola M.A."/>
            <person name="Kuja-Panula J."/>
            <person name="Lauri S.E."/>
            <person name="Taira T."/>
            <person name="Rauvala H."/>
        </authorList>
    </citation>
    <scope>FUNCTION</scope>
    <scope>TRANSPORTER ACTIVITY</scope>
    <scope>SUBUNIT</scope>
    <scope>INTERACTION WITH AMIGO1</scope>
    <scope>DOMAIN</scope>
    <scope>SUBCELLULAR LOCATION</scope>
    <scope>TISSUE SPECIFICITY</scope>
</reference>
<reference key="17">
    <citation type="journal article" date="2013" name="J. Pharmacol. Exp. Ther.">
        <title>The role of voltage-gated potassium channels Kv2.1 and Kv2.2 in the regulation of insulin and somatostatin release from pancreatic islets.</title>
        <authorList>
            <person name="Li X.N."/>
            <person name="Herrington J."/>
            <person name="Petrov A."/>
            <person name="Ge L."/>
            <person name="Eiermann G."/>
            <person name="Xiong Y."/>
            <person name="Jensen M.V."/>
            <person name="Hohmeier H.E."/>
            <person name="Newgard C.B."/>
            <person name="Garcia M.L."/>
            <person name="Wagner M."/>
            <person name="Zhang B.B."/>
            <person name="Thornberry N.A."/>
            <person name="Howard A.D."/>
            <person name="Kaczorowski G.J."/>
            <person name="Zhou Y.P."/>
        </authorList>
    </citation>
    <scope>FUNCTION</scope>
</reference>
<reference key="18">
    <citation type="journal article" date="2014" name="Genes Brain Behav.">
        <title>Deletion of the Kv2.1 delayed rectifier potassium channel leads to neuronal and behavioral hyperexcitability.</title>
        <authorList>
            <person name="Speca D.J."/>
            <person name="Ogata G."/>
            <person name="Mandikian D."/>
            <person name="Bishop H.I."/>
            <person name="Wiler S.W."/>
            <person name="Eum K."/>
            <person name="Wenzel H.J."/>
            <person name="Doisy E.T."/>
            <person name="Matt L."/>
            <person name="Campi K.L."/>
            <person name="Golub M.S."/>
            <person name="Nerbonne J.M."/>
            <person name="Hell J.W."/>
            <person name="Trainor B.C."/>
            <person name="Sack J.T."/>
            <person name="Schwartzkroin P.A."/>
            <person name="Trimmer J.S."/>
        </authorList>
    </citation>
    <scope>FUNCTION</scope>
    <scope>DISRUPTION PHENOTYPE</scope>
    <scope>TISSUE SPECIFICITY</scope>
</reference>
<reference key="19">
    <citation type="journal article" date="2014" name="J. Comp. Neurol.">
        <title>A unique ion channel clustering domain on the axon initial segment of mammalian neurons.</title>
        <authorList>
            <person name="King A.N."/>
            <person name="Manning C.F."/>
            <person name="Trimmer J.S."/>
        </authorList>
    </citation>
    <scope>SUBCELLULAR LOCATION</scope>
    <scope>TISSUE SPECIFICITY</scope>
</reference>
<reference key="20">
    <citation type="journal article" date="2009" name="Am. J. Physiol.">
        <title>Kv2.1 and silent Kv subunits underlie the delayed rectifier K+ current in cultured small mouse DRG neurons.</title>
        <authorList>
            <person name="Bocksteins E."/>
            <person name="Raes A.L."/>
            <person name="Van de Vijver G."/>
            <person name="Bruyns T."/>
            <person name="Van Bogaert P.P."/>
            <person name="Snyders D.J."/>
        </authorList>
    </citation>
    <scope>SUBCELLULAR LOCATION</scope>
    <scope>TISSUE SPECIFICITY</scope>
</reference>
<evidence type="ECO:0000250" key="1">
    <source>
        <dbReference type="UniProtKB" id="P15387"/>
    </source>
</evidence>
<evidence type="ECO:0000250" key="2">
    <source>
        <dbReference type="UniProtKB" id="P63142"/>
    </source>
</evidence>
<evidence type="ECO:0000250" key="3">
    <source>
        <dbReference type="UniProtKB" id="Q14721"/>
    </source>
</evidence>
<evidence type="ECO:0000256" key="4">
    <source>
        <dbReference type="SAM" id="MobiDB-lite"/>
    </source>
</evidence>
<evidence type="ECO:0000269" key="5">
    <source>
    </source>
</evidence>
<evidence type="ECO:0000269" key="6">
    <source>
    </source>
</evidence>
<evidence type="ECO:0000269" key="7">
    <source>
    </source>
</evidence>
<evidence type="ECO:0000269" key="8">
    <source>
    </source>
</evidence>
<evidence type="ECO:0000269" key="9">
    <source>
    </source>
</evidence>
<evidence type="ECO:0000269" key="10">
    <source>
    </source>
</evidence>
<evidence type="ECO:0000269" key="11">
    <source>
    </source>
</evidence>
<evidence type="ECO:0000269" key="12">
    <source>
    </source>
</evidence>
<evidence type="ECO:0000269" key="13">
    <source>
    </source>
</evidence>
<evidence type="ECO:0000269" key="14">
    <source>
    </source>
</evidence>
<evidence type="ECO:0000269" key="15">
    <source>
    </source>
</evidence>
<evidence type="ECO:0000269" key="16">
    <source>
    </source>
</evidence>
<evidence type="ECO:0000303" key="17">
    <source>
    </source>
</evidence>
<evidence type="ECO:0000305" key="18"/>
<evidence type="ECO:0000305" key="19">
    <source>
    </source>
</evidence>
<evidence type="ECO:0000305" key="20">
    <source>
    </source>
</evidence>
<evidence type="ECO:0000312" key="21">
    <source>
        <dbReference type="MGI" id="MGI:96666"/>
    </source>
</evidence>
<evidence type="ECO:0007744" key="22">
    <source>
    </source>
</evidence>
<evidence type="ECO:0007744" key="23">
    <source>
    </source>
</evidence>
<name>KCNB1_MOUSE</name>
<comment type="function">
    <text evidence="1 3 5 7 8 9 11 13 14 16">Voltage-gated potassium channel that mediates transmembrane potassium transport in excitable membranes, primarily in the brain, but also in the pancreas and cardiovascular system. Contributes to the regulation of the action potential (AP) repolarization, duration and frequency of repetitive AP firing in neurons, muscle cells and endocrine cells and plays a role in homeostatic attenuation of electrical excitability throughout the brain (PubMed:14684365, PubMed:19383458, PubMed:24494598). Also plays a role in the regulation of exocytosis independently of its electrical function (By similarity). Forms tetrameric potassium-selective channels through which potassium ions pass in accordance with their electrochemical gradient. The channel alternates between opened and closed conformations in response to the voltage difference across the membrane. Homotetrameric channels mediate a delayed-rectifier voltage-dependent outward potassium current that display rapid activation and slow inactivation in response to membrane depolarization (PubMed:22056818). Can form functional homotetrameric and heterotetrameric channels that contain variable proportions of KCNB2; channel properties depend on the type of alpha subunits that are part of the channel (By similarity). Can also form functional heterotetrameric channels with other alpha subunits that are non-conducting when expressed alone, such as KCNF1, KCNG1, KCNG3, KCNG4, KCNH1, KCNH2, KCNS1, KCNS2, KCNS3 and KCNV1, creating a functionally diverse range of channel complexes (By similarity). Heterotetrameric channel activity formed with KCNS3 show increased current amplitude with the threshold for action potential activation shifted towards more negative values in hypoxic-treated pulmonary artery smooth muscle cells (By similarity). Channel properties are also modulated by cytoplasmic ancillary beta subunits, such as AMIGO1, KCNE1, KCNE2 and KCNE3, slowing activation and inactivation rate of the delayed rectifier potassium channels (PubMed:22056818). In vivo, membranes probably contain a mixture of heteromeric potassium channel complexes, making it difficult to assign currents observed in intact tissues to any particular potassium channel family member. Major contributor to the delayed-rectifier voltage-gated potassium current in neurons of the central nervous system, sympathetic ganglion neurons, neuroendocrine cells, pancreatic beta cells, cardiomyocytes and smooth muscle (PubMed:10506487, PubMed:12270920, PubMed:17767909, PubMed:23161216, PubMed:24494598). Mediates the major part of the somatodendritic delayed-rectifier potassium current in hippocampal and cortical pyramidal neurons and sympathetic superior cervical ganglion (CGC) neurons that acts to slow down periods of firing, especially during high frequency stimulation (By similarity). Plays a role in the induction of long-term potentiation (LTP) of neuron excitability in the CA3 layer of the hippocampus (PubMed:24494598). Contributes to the regulation of the glucose-induced amplitude and duration of action potentials in pancreatic beta-cells, hence limiting calcium influx and insulin secretion (PubMed:12270920, PubMed:17767909, PubMed:19383458, PubMed:23161216). Plays a role in the regulation of resting membrane potential and contraction in hypoxia-treated pulmonary artery smooth muscle cells (By similarity). May contribute to the regulation of the duration of both the action potential of cardiomyocytes and the heart ventricular repolarization QT interval (PubMed:10506487, PubMed:14684365). Contributes to the pronounced pro-apoptotic potassium current surge during neuronal apoptotic cell death in response to oxidative injury (By similarity). May confer neuroprotection in response to hypoxia/ischemic insults by suppressing pyramidal neurons hyperexcitability in hippocampal and cortical regions (By similarity). Promotes trafficking of KCNG3, KCNH1 and KCNH2 to the cell surface membrane, presumably by forming heterotetrameric channels with these subunits (By similarity). Plays a role in the calcium-dependent recruitment and release of fusion-competent vesicles from the soma of neurons, neuroendocrine and glucose-induced pancreatic beta cells by binding key components of the fusion machinery in a pore-independent manner (By similarity).</text>
</comment>
<comment type="catalytic activity">
    <reaction evidence="12 13">
        <text>K(+)(in) = K(+)(out)</text>
        <dbReference type="Rhea" id="RHEA:29463"/>
        <dbReference type="ChEBI" id="CHEBI:29103"/>
    </reaction>
</comment>
<comment type="activity regulation">
    <text evidence="1 12 19 20">Inhibited by 42 nM hanatoxin 1 (HaTx1), a spider venom toxin of the tarantula G.spatulata. Inhibited by 100 nM stromatoxin 1 (ScTx1), a spider venom toxin of the tarantula S.calceata (By similarity). Modestly sensitive to millimolar levels of tetraethylammonium (TEA) and 4-aminopyridine (4-AP) (PubMed:10414301, PubMed:15858231, PubMed:2002364). Completely insensitive to toxins such as dendrotoxin (DTX) and charybdotoxin (CTX) (By similarity).</text>
</comment>
<comment type="biophysicochemical properties">
    <kinetics>
        <text evidence="12 19 20">Homotetrameric channels expressed in xenopus oocytes or in mammalian non-neuronal cells display delayed-rectifier voltage-dependent potassium currents which are activated during membrane depolarization, i.e within a risetime of more than 20 msec (PubMed:2002364). After that, inactivate very slowly, i.e within more than 5 sec (PubMed:2002364). Their activation requires low threshold potentials at about -20 to -30 mV with a midpoint activation at about 10 mV. For inactivation, the voltage at half-maximal amplitude is about -20 mV. The time constant for recovery after inactivation is about 1.6 sec. Channels have an unitary conductance of about 8 pS. The voltage-dependence of activation and inactivation and other channel characteristics vary depending on the experimental conditions, the expression system, the presence or absence of ancillary subunits and post-translational modifications.</text>
    </kinetics>
</comment>
<comment type="subunit">
    <text evidence="1 3 6 13">Homotetramer or heterotetramer with KCNB2. Heterotetramer with non-conducting channel-forming alpha subunits such as KCNF1, KCNG1, KCNG3, KCNG4, KCNH1, KCNH2, KCNS1, KCNS2, KCNS3 and KCNV1 (By similarity). Channel activity is regulated by association with ancillary beta subunits such as AMIGO1, KCNE1, KCNE2 and KCNE3 (PubMed:22056818). Interacts with KCNV2 (By similarity). Self-associates (via N-terminus and C-terminus); self-association is required to regulate trafficking, gating and C-terminal phosphorylation-dependent modulation of the channel. Interacts (via C-terminus) with STX1A (via C-terminus); this decreases the rate of channel activation and increases the rate of channel inactivation in pancreatic beta cells, also induces neuronal apoptosis in response to oxidative injury as well as pore-independent enhancement of exocytosis in neuroendocrine cells, chromaffin cells, pancreatic beta cells and from the soma of dorsal root ganglia (DRG) neurons. Interacts (via N-terminus) with SNAP25; this decreases the rate of channel inactivation in pancreatic beta cells and also increases interaction during neuronal apoptosis in a N-methyl-D-aspartate receptor (NMDAR)-dependent manner. Interacts (via N-terminus and C-terminus) with VAMP2 (via N-terminus); stimulates channel inactivation rate. Interacts with CREB1; this promotes channel acetylation in response to stimulation by incretin hormones. Interacts (via N-terminus and C-terminus) with MYL12B. Interacts (via N-terminus) with PIAS3; this increases the number of functional channels at the cell surface. Interacts with SUMO1 (By similarity). Interacts (via phosphorylated form) with PTPRE isoform 2; this reduces phosphorylation and channel activity in heterologous cells (PubMed:10921884). Interacts (via phosphorylated FFAT motif) with VAPA and VAPB (By similarity).</text>
</comment>
<comment type="interaction">
    <interactant intactId="EBI-7511364">
        <id>Q03717</id>
    </interactant>
    <interactant intactId="EBI-7511393">
        <id>Q80ZD8</id>
        <label>Amigo1</label>
    </interactant>
    <organismsDiffer>false</organismsDiffer>
    <experiments>4</experiments>
</comment>
<comment type="subcellular location">
    <subcellularLocation>
        <location evidence="5 7 8 9 10 13 15">Cell membrane</location>
    </subcellularLocation>
    <subcellularLocation>
        <location evidence="13 15">Perikaryon</location>
    </subcellularLocation>
    <subcellularLocation>
        <location evidence="15">Cell projection</location>
        <location evidence="15">Axon</location>
    </subcellularLocation>
    <subcellularLocation>
        <location evidence="13 15">Cell projection</location>
        <location evidence="13 15">Dendrite</location>
    </subcellularLocation>
    <subcellularLocation>
        <location>Membrane</location>
        <topology>Multi-pass membrane protein</topology>
    </subcellularLocation>
    <subcellularLocation>
        <location evidence="1">Postsynaptic cell membrane</location>
    </subcellularLocation>
    <subcellularLocation>
        <location evidence="1">Synapse</location>
    </subcellularLocation>
    <subcellularLocation>
        <location evidence="1">Synapse</location>
        <location evidence="1">Synaptosome</location>
    </subcellularLocation>
    <subcellularLocation>
        <location evidence="1">Lateral cell membrane</location>
    </subcellularLocation>
    <subcellularLocation>
        <location evidence="1">Cell membrane</location>
        <location evidence="1">Sarcolemma</location>
    </subcellularLocation>
    <text evidence="1 3 10 13 15">Localizes to high-density somatodendritic clusters and non-clustered sites on the surface of neocortical and hippocampal pyramidal neurons in a cortical actin cytoskeleton-dependent manner (PubMed:24477962). Also localizes to high-density clusters in the axon initial segment (AIS), at ankyrin-G-deficient sites, on the surface of neocortical and hippocampal pyramidal neurons (PubMed:24477962). KCNB1-containing AIS clusters localize either in close apposition to smooth endoplasmic reticulum cisternal organelles or with GABA-A receptor-containing synapses of hippocampal and cortical pyramidal neurons, respectively (PubMed:24477962). Localizes to high-density clusters on the cell surface of atrial and ventricular myocytes and at the lateral plasma membrane in epithelial cells. Localizes both to the axial and transverse tubules (T tubule) and sarcolemma in ventricular myocytes. Associated with lipid raft domains. In cortical neurons, apoptotic injuries induce de novo plasma membrane insertion in a SNARE-dependent manner causing an apoptotic potassium current surge (By similarity).</text>
</comment>
<comment type="tissue specificity">
    <text evidence="5 6 7 8 9 10 13 15 16">Expressed in the brain (PubMed:17767909, PubMed:22056818). Expressed in the heart (PubMed:14684365). Expressed in pyramidal neurons and interneurons of the hippocampus (PubMed:22056818, PubMed:24494598). Expressed in neocortical pyramidal neurons (PubMed:22056818, PubMed:24477962). Expressed in dorsal root ganglia (DRG) neurons (PubMed:19357235). Expressed in pancreatic beta cells (PubMed:12270920, PubMed:17767909). Expressed in Schwann cells (PubMed:10921884). Expressed in ventricular myocytes (at protein level) (PubMed:10506487, PubMed:14684365).</text>
</comment>
<comment type="domain">
    <text evidence="2">The transmembrane segment S4 functions as a voltage-sensor and is characterized by a series of positively charged amino acids at every third position. Channel opening and closing is effected by a conformation change that affects the position and orientation of the voltage-sensor paddle formed by S3 and S4 within the membrane. A transmembrane electric field that is positive inside would push the positively charged S4 segment outwards, thereby opening the pore, while a field that is negative inside would pull the S4 segment inwards and close the pore. Changes in the position and orientation of S4 are then transmitted to the activation gate formed by the inner helix bundle via the S4-S5 linker region.</text>
</comment>
<comment type="domain">
    <text evidence="1 3 13">The N-terminal and C-terminal cytoplasmic regions mediate homooligomerization; self-association is required to regulate trafficking, gating and C-terminal phosphorylation-dependent modulation of the channel (By similarity). The N-terminal cytoplasmic region is important for interaction with other channel-forming alpha subunits and with ancillary beta subunits (PubMed:22056818). The C-terminus is necessary and sufficient for the restricted localization to, and clustering within, both in soma and proximal portions of dendrite of neurons and in lateral membrane of non-neuronal polarized cells. The C-terminus is both necessary and sufficient as a mediator of cholinergic and calcium-stimulated modulation of channel cell membrane clustering localization and activity in hippocampal neurons (By similarity).</text>
</comment>
<comment type="domain">
    <text evidence="3">The FFAT motif is involved in the interaction with VAPA and VAPB and its phosphorylation regulates these interactions.</text>
</comment>
<comment type="PTM">
    <text evidence="1 3 6">Phosphorylated. Differential C-terminal phosphorylation on a subset of serines allows graded activity-dependent regulation of channel gating in hippocampal neurons. Ser-607 and Tyr-128 are significant sites of voltage-gated regulation through phosphorylation/dephosphorylation activities. Tyr-128 can be phosphorylated by Src and dephosphorylated by cytoplasmic form of the phosphatase PTPRE. CDK5-induced Ser-607 phosphorylation increases in response to acute blockade of neuronal activity. Phosphorylated on Tyr-128 by Src and on Ser-804 by MAPK14/P38MAPK; phosphorylations are necessary and sufficient for an increase in plasma membrane insertion, apoptotic potassium current surge and completion of the neuronal cell death program. Phosphorylated on Ser-520, Ser-655, Ser-607 and Ser-804 by CDK5; phosphorylation is necessary for KCNB1 channel clustering formation. The Ser-607 phosphorylation state differs between KCNB1-containing clusters on the proximal and distal portions of the axon initial segment (AIS). Highly phosphorylated on serine residues in the C-terminal cytoplasmic tail in resting neurons. Phosphorylated in pancreatic beta cells in response to incretin hormones stimulation in a PKA- and RPS6KA5/MSK1-dependent signaling pathway, promoting beta cell survival. Phosphorylation on Ser-567 is reduced during postnatal development with low levels at P2 and P5; levels then increase to reach adult levels by P14. Phosphorylation on Ser-457, Ser-541, Ser-567, Ser-607, Ser-655 and Ser-719 as well as the N-terminal Ser-15 are sensitive to calcineurin-mediated dephosphorylation contributing to the modulation of the voltage-dependent gating properties. Dephosphorylation by phosphatase PTPRE confers neuroprotection by its inhibitory influence on the neuronal apoptotic potassium current surge in a Zn(2+)-dependent manner. Dephosphorylated at Ser-607 by protein phosphatase PPP1CA. Hypoxia-, seizure- or glutamate-induced neuronal activities promote calcium/calcineurin-dependent dephosphorylation resulting in a loss of KCNB1-containing clustering and enhanced channel activity. In response to brain ischemia, Ser-567 and Ser-607 are strongly dephosphorylated while Ser-457 and Ser-719 are less dephosphorylated. In response to brain seizures, phosphorylation levels on Ser-567 and Ser-607 are greatly reduced (By similarity). Phosphorylated/dephosphorylated by Src or FYN tyrosine-protein kinases and tyrosine phosphatase PTPRE in primary Schwann cells and sciatic nerve tissue (PubMed:10921884). Phosphorylation at Ser-593 of the FFAT motif activates interaction with MOSPD2, VAPA and VAPB (By similarity).</text>
</comment>
<comment type="PTM">
    <text evidence="1">Acetylated. Acetylation occurs in pancreatic beta cells in response to stimulation by incretin hormones in a histone acetyltransferase (HAT)/histone deacetylase (HDAC)-dependent signaling pathway, promoting beta cell survival.</text>
</comment>
<comment type="PTM">
    <text evidence="1 3">Sumoylated on Lys-474, preferentially with SUMO1; sumoylation induces a positive shift in the voltage-dependence of activation and inhibits channel activity. Sumoylation increases the frequency of repetitive action potential firing at the cell surface of hippocampal neurons and decreases its frequency in pancreatic beta cells. Desumoylated by SENP1.</text>
</comment>
<comment type="disruption phenotype">
    <text evidence="9 11 16">Mice show normal motor coordination and visual acuity, but are hyperactive, exhibit defects in spatial learning ability and show reduced anxiety-like behavior (PubMed:24494598). Show a higher incidence and a shorter latency to seizure progression compared to wild-type mice (PubMed:24494598). Display reduced fasting blood glucose levels and elevated serum insulin levels (PubMed:17767909, PubMed:19383458). Glucose tolerance and insulin secretion is enhanced compared to control animals (PubMed:17767909, PubMed:19383458). Show impaired long-term potentiation in hippocampal neurons (PubMed:24494598). Display a reduction in the slowly deactivating delayed rectifier potassium current in hippocampal pyramidal neurons (PubMed:24494598). Glucose-induced action potential (AP) duration and amplitude is increased while the firing frequency is reduced in pancreatic beta cells (PubMed:17767909, PubMed:19383458).</text>
</comment>
<comment type="similarity">
    <text evidence="18">Belongs to the potassium channel family. B (Shab) (TC 1.A.1.2) subfamily. Kv2.1/KCNB1 sub-subfamily.</text>
</comment>
<feature type="chain" id="PRO_0000054043" description="Potassium voltage-gated channel subfamily B member 1">
    <location>
        <begin position="1"/>
        <end position="857"/>
    </location>
</feature>
<feature type="topological domain" description="Cytoplasmic" evidence="2">
    <location>
        <begin position="1"/>
        <end position="186"/>
    </location>
</feature>
<feature type="transmembrane region" description="Helical; Name=Segment S1" evidence="2">
    <location>
        <begin position="187"/>
        <end position="208"/>
    </location>
</feature>
<feature type="topological domain" description="Extracellular" evidence="2">
    <location>
        <begin position="209"/>
        <end position="228"/>
    </location>
</feature>
<feature type="transmembrane region" description="Helical; Name=Segment S2" evidence="2">
    <location>
        <begin position="229"/>
        <end position="250"/>
    </location>
</feature>
<feature type="topological domain" description="Cytoplasmic" evidence="2">
    <location>
        <begin position="251"/>
        <end position="259"/>
    </location>
</feature>
<feature type="transmembrane region" description="Helical; Name=Segment S3" evidence="2">
    <location>
        <begin position="260"/>
        <end position="280"/>
    </location>
</feature>
<feature type="topological domain" description="Extracellular" evidence="2">
    <location>
        <begin position="281"/>
        <end position="294"/>
    </location>
</feature>
<feature type="transmembrane region" description="Helical; Voltage-sensor; Name=Segment S4" evidence="2">
    <location>
        <begin position="295"/>
        <end position="316"/>
    </location>
</feature>
<feature type="topological domain" description="Cytoplasmic" evidence="2">
    <location>
        <begin position="317"/>
        <end position="330"/>
    </location>
</feature>
<feature type="transmembrane region" description="Helical; Name=Segment S5" evidence="2">
    <location>
        <begin position="331"/>
        <end position="351"/>
    </location>
</feature>
<feature type="topological domain" description="Extracellular" evidence="2">
    <location>
        <begin position="352"/>
        <end position="364"/>
    </location>
</feature>
<feature type="intramembrane region" description="Helical; Name=Pore helix" evidence="2">
    <location>
        <begin position="365"/>
        <end position="376"/>
    </location>
</feature>
<feature type="intramembrane region" evidence="2">
    <location>
        <begin position="377"/>
        <end position="384"/>
    </location>
</feature>
<feature type="topological domain" description="Extracellular" evidence="2">
    <location>
        <begin position="385"/>
        <end position="391"/>
    </location>
</feature>
<feature type="transmembrane region" description="Helical; Name=Segment S6" evidence="2">
    <location>
        <begin position="392"/>
        <end position="420"/>
    </location>
</feature>
<feature type="topological domain" description="Cytoplasmic" evidence="2">
    <location>
        <begin position="421"/>
        <end position="857"/>
    </location>
</feature>
<feature type="region of interest" description="Disordered" evidence="4">
    <location>
        <begin position="1"/>
        <end position="21"/>
    </location>
</feature>
<feature type="region of interest" description="Self-association" evidence="1">
    <location>
        <begin position="59"/>
        <end position="75"/>
    </location>
</feature>
<feature type="region of interest" description="Self-association" evidence="1">
    <location>
        <begin position="448"/>
        <end position="481"/>
    </location>
</feature>
<feature type="region of interest" description="Disordered" evidence="4">
    <location>
        <begin position="475"/>
        <end position="569"/>
    </location>
</feature>
<feature type="region of interest" description="Disordered" evidence="4">
    <location>
        <begin position="608"/>
        <end position="627"/>
    </location>
</feature>
<feature type="region of interest" description="Disordered" evidence="4">
    <location>
        <begin position="768"/>
        <end position="802"/>
    </location>
</feature>
<feature type="region of interest" description="Disordered" evidence="4">
    <location>
        <begin position="816"/>
        <end position="857"/>
    </location>
</feature>
<feature type="short sequence motif" description="Selectivity filter" evidence="2">
    <location>
        <begin position="377"/>
        <end position="382"/>
    </location>
</feature>
<feature type="short sequence motif" description="FFAT" evidence="3">
    <location>
        <begin position="590"/>
        <end position="596"/>
    </location>
</feature>
<feature type="compositionally biased region" description="Basic and acidic residues" evidence="4">
    <location>
        <begin position="504"/>
        <end position="516"/>
    </location>
</feature>
<feature type="compositionally biased region" description="Polar residues" evidence="4">
    <location>
        <begin position="517"/>
        <end position="545"/>
    </location>
</feature>
<feature type="compositionally biased region" description="Polar residues" evidence="4">
    <location>
        <begin position="769"/>
        <end position="784"/>
    </location>
</feature>
<feature type="compositionally biased region" description="Basic and acidic residues" evidence="4">
    <location>
        <begin position="828"/>
        <end position="838"/>
    </location>
</feature>
<feature type="modified residue" description="Phosphoserine" evidence="1">
    <location>
        <position position="15"/>
    </location>
</feature>
<feature type="modified residue" description="Phosphotyrosine; by Src" evidence="1">
    <location>
        <position position="128"/>
    </location>
</feature>
<feature type="modified residue" description="Phosphoserine" evidence="23">
    <location>
        <position position="444"/>
    </location>
</feature>
<feature type="modified residue" description="Phosphoserine" evidence="23">
    <location>
        <position position="457"/>
    </location>
</feature>
<feature type="modified residue" description="Phosphoserine" evidence="1">
    <location>
        <position position="484"/>
    </location>
</feature>
<feature type="modified residue" description="Phosphoserine" evidence="1">
    <location>
        <position position="496"/>
    </location>
</feature>
<feature type="modified residue" description="Phosphoserine" evidence="1">
    <location>
        <position position="503"/>
    </location>
</feature>
<feature type="modified residue" description="Phosphoserine" evidence="1">
    <location>
        <position position="519"/>
    </location>
</feature>
<feature type="modified residue" description="Phosphoserine; by CDK5; in vitro" evidence="1">
    <location>
        <position position="520"/>
    </location>
</feature>
<feature type="modified residue" description="Phosphoserine" evidence="1">
    <location>
        <position position="541"/>
    </location>
</feature>
<feature type="modified residue" description="Phosphoserine" evidence="1">
    <location>
        <position position="567"/>
    </location>
</feature>
<feature type="modified residue" description="Phosphoserine" evidence="1">
    <location>
        <position position="590"/>
    </location>
</feature>
<feature type="modified residue" description="Phosphoserine" evidence="3">
    <location>
        <position position="593"/>
    </location>
</feature>
<feature type="modified residue" description="Phosphoserine; by CDK5" evidence="1">
    <location>
        <position position="607"/>
    </location>
</feature>
<feature type="modified residue" description="Phosphoserine" evidence="22 23">
    <location>
        <position position="655"/>
    </location>
</feature>
<feature type="modified residue" description="Phosphoserine" evidence="1">
    <location>
        <position position="719"/>
    </location>
</feature>
<feature type="modified residue" description="Phosphoserine" evidence="1">
    <location>
        <position position="771"/>
    </location>
</feature>
<feature type="modified residue" description="Phosphoserine" evidence="1">
    <location>
        <position position="799"/>
    </location>
</feature>
<feature type="modified residue" description="Phosphoserine" evidence="23">
    <location>
        <position position="804"/>
    </location>
</feature>
<feature type="modified residue" description="Phosphothreonine" evidence="1">
    <location>
        <position position="836"/>
    </location>
</feature>
<feature type="cross-link" description="Glycyl lysine isopeptide (Lys-Gly) (interchain with G-Cter in SUMO)" evidence="1">
    <location>
        <position position="475"/>
    </location>
</feature>
<feature type="sequence conflict" description="In Ref. 1; AAA40112." evidence="18" ref="1">
    <original>A</original>
    <variation>R</variation>
    <location>
        <position position="701"/>
    </location>
</feature>
<feature type="sequence conflict" description="In Ref. 1; AAA40112." evidence="18" ref="1">
    <original>P</original>
    <variation>L</variation>
    <location>
        <position position="773"/>
    </location>
</feature>
<keyword id="KW-1003">Cell membrane</keyword>
<keyword id="KW-0966">Cell projection</keyword>
<keyword id="KW-0268">Exocytosis</keyword>
<keyword id="KW-0407">Ion channel</keyword>
<keyword id="KW-0406">Ion transport</keyword>
<keyword id="KW-1017">Isopeptide bond</keyword>
<keyword id="KW-0472">Membrane</keyword>
<keyword id="KW-0597">Phosphoprotein</keyword>
<keyword id="KW-0628">Postsynaptic cell membrane</keyword>
<keyword id="KW-0630">Potassium</keyword>
<keyword id="KW-0631">Potassium channel</keyword>
<keyword id="KW-0633">Potassium transport</keyword>
<keyword id="KW-1185">Reference proteome</keyword>
<keyword id="KW-0770">Synapse</keyword>
<keyword id="KW-0771">Synaptosome</keyword>
<keyword id="KW-0812">Transmembrane</keyword>
<keyword id="KW-1133">Transmembrane helix</keyword>
<keyword id="KW-0813">Transport</keyword>
<keyword id="KW-0832">Ubl conjugation</keyword>
<keyword id="KW-0851">Voltage-gated channel</keyword>
<accession>Q03717</accession>
<accession>Q8K0D1</accession>
<sequence length="857" mass="95591">MPAGMTKHGSRSTSSLPPEPMEIVRSKACSRRVRLNVGGLAHEVLWRTLDRLPRTRLGKLRDCNTHDSLLQVCDDYSLEDNEYFFDRHPGAFTSILNFYRTGRLHMMEEMCALSFSQELDYWGIDEIYLESCCQARYHQKKEQMNEELKREAETLREREGEEFDNTCCAEKRKKLWDLLEKPNSSVAAKILAIISIMFIVLSTIALSLNTLPELQSLDEFGQSTDNPQLAHVEAVCIAWFTMEYLLRFLSSPKKWKFFKGPLNAIDLLAILPYYVTIFLTESNKSVLQFQNVRRVVQIFRIMRILRILKLARHSTGLQSLGFTLRRSYNELGLLILFLAMGIMIFSSLVFFAEKDEDDTKFKSIPASFWWATITMTTVGYGDIYPKTLLGKIVGGLCCIAGVLVIALPIPIIVNNFSEFYKEQKRQEKAIKRREALERAKRNGSIVSMNMKDAFARSIEMMDIVVEKNGEGVAKKDKVQDNHLSPNKWKWTKRALSETSSSKSFETKEQGSPEKARSSSSPQHLNVQQLQDMYSKMAKTQSQPILNTKEMAPQSQPQEELEMGSMPSPVAPLPTRTEGVIDMRSMSSIDSFISCATDFPEATRFSHSPLASLSGKSGGSTAPEVGWRGALGASGGRLMETNPIPEASRSGFFVESPRSSMKTHNPMKLRALKVNFLEGDPTPLLPALGLYHDPLRNRGGAAAAVAGLECASLLDKPVLSPESSIYTTASARTPPRSPEKHTAIAFNFEAGVHQYIDTDTDDEGQLLYSVDSSPPKSLHGSTSPKFSLGARTEKNHFESSPLPTSPKFLRPNCVYASEGLPGKGPGAQEKCKLENHTSPDVHMLPGGGAHGSTRDQSI</sequence>
<gene>
    <name evidence="21" type="primary">Kcnb1</name>
</gene>